<sequence length="402" mass="44456">MSRVSQARNLGKYFLLIDNMLVVLVFFVVFPLISIRFVDQMGWAAVMVGIALGLRQFIQQGLGIFGGAIADRFGAKPMIVTGMLMRAAGFATMGIAHEPWLLWFSCFLSGLGGTLFDPPRSALVVKLIRPEQRGRFFSLLMMQDSAGAVIGALLGSWLLQYDFRLVCATGAILFILCALFNAWLLPAWKLSTVRTPVREGMRRVMSDKRFVTYVLTLAGYYMLAVQVMLMLPIMVNDIAGSPAAVKWMYAIEACLSLTLLYPIARWSEKRFRLEHRLMAGLLVMSLSMIPIGMVGNLQQLFTLICAFYIGSVIAEPARETLSASLADARARGSYMGFSRLGLAIGGAIGYIGGGWLFDMGKALTQPELPWMMLGIIGFITFLALGWQFSHKRTPRRMLEPGA</sequence>
<reference key="1">
    <citation type="journal article" date="2005" name="Nucleic Acids Res.">
        <title>The genome sequence of Salmonella enterica serovar Choleraesuis, a highly invasive and resistant zoonotic pathogen.</title>
        <authorList>
            <person name="Chiu C.-H."/>
            <person name="Tang P."/>
            <person name="Chu C."/>
            <person name="Hu S."/>
            <person name="Bao Q."/>
            <person name="Yu J."/>
            <person name="Chou Y.-Y."/>
            <person name="Wang H.-S."/>
            <person name="Lee Y.-S."/>
        </authorList>
    </citation>
    <scope>NUCLEOTIDE SEQUENCE [LARGE SCALE GENOMIC DNA]</scope>
    <source>
        <strain>SC-B67</strain>
    </source>
</reference>
<proteinExistence type="inferred from homology"/>
<comment type="subcellular location">
    <subcellularLocation>
        <location evidence="1">Cell inner membrane</location>
        <topology evidence="1">Multi-pass membrane protein</topology>
    </subcellularLocation>
</comment>
<comment type="similarity">
    <text evidence="1">Belongs to the major facilitator superfamily. DHA1 family. MdtH (TC 2.A.1.2.21) subfamily.</text>
</comment>
<evidence type="ECO:0000255" key="1">
    <source>
        <dbReference type="HAMAP-Rule" id="MF_01529"/>
    </source>
</evidence>
<accession>Q57QJ1</accession>
<dbReference type="EMBL" id="AE017220">
    <property type="protein sequence ID" value="AAX65020.1"/>
    <property type="molecule type" value="Genomic_DNA"/>
</dbReference>
<dbReference type="RefSeq" id="WP_001539700.1">
    <property type="nucleotide sequence ID" value="NC_006905.1"/>
</dbReference>
<dbReference type="SMR" id="Q57QJ1"/>
<dbReference type="KEGG" id="sec:SCH_1114"/>
<dbReference type="HOGENOM" id="CLU_001265_60_2_6"/>
<dbReference type="Proteomes" id="UP000000538">
    <property type="component" value="Chromosome"/>
</dbReference>
<dbReference type="GO" id="GO:0005886">
    <property type="term" value="C:plasma membrane"/>
    <property type="evidence" value="ECO:0007669"/>
    <property type="project" value="UniProtKB-SubCell"/>
</dbReference>
<dbReference type="GO" id="GO:0022857">
    <property type="term" value="F:transmembrane transporter activity"/>
    <property type="evidence" value="ECO:0007669"/>
    <property type="project" value="UniProtKB-UniRule"/>
</dbReference>
<dbReference type="CDD" id="cd17329">
    <property type="entry name" value="MFS_MdtH_MDR_like"/>
    <property type="match status" value="1"/>
</dbReference>
<dbReference type="FunFam" id="1.20.1250.20:FF:000039">
    <property type="entry name" value="Multidrug resistance protein MdtH"/>
    <property type="match status" value="1"/>
</dbReference>
<dbReference type="Gene3D" id="1.20.1250.20">
    <property type="entry name" value="MFS general substrate transporter like domains"/>
    <property type="match status" value="1"/>
</dbReference>
<dbReference type="HAMAP" id="MF_01529">
    <property type="entry name" value="MFS_MdtH"/>
    <property type="match status" value="1"/>
</dbReference>
<dbReference type="InterPro" id="IPR011701">
    <property type="entry name" value="MFS"/>
</dbReference>
<dbReference type="InterPro" id="IPR020846">
    <property type="entry name" value="MFS_dom"/>
</dbReference>
<dbReference type="InterPro" id="IPR036259">
    <property type="entry name" value="MFS_trans_sf"/>
</dbReference>
<dbReference type="InterPro" id="IPR050171">
    <property type="entry name" value="MFS_Transporters"/>
</dbReference>
<dbReference type="InterPro" id="IPR022855">
    <property type="entry name" value="Multidrug-R_MdtH"/>
</dbReference>
<dbReference type="NCBIfam" id="NF008650">
    <property type="entry name" value="PRK11646.1"/>
    <property type="match status" value="1"/>
</dbReference>
<dbReference type="PANTHER" id="PTHR23517:SF2">
    <property type="entry name" value="MULTIDRUG RESISTANCE PROTEIN MDTH"/>
    <property type="match status" value="1"/>
</dbReference>
<dbReference type="PANTHER" id="PTHR23517">
    <property type="entry name" value="RESISTANCE PROTEIN MDTM, PUTATIVE-RELATED-RELATED"/>
    <property type="match status" value="1"/>
</dbReference>
<dbReference type="Pfam" id="PF07690">
    <property type="entry name" value="MFS_1"/>
    <property type="match status" value="1"/>
</dbReference>
<dbReference type="SUPFAM" id="SSF103473">
    <property type="entry name" value="MFS general substrate transporter"/>
    <property type="match status" value="1"/>
</dbReference>
<dbReference type="PROSITE" id="PS50850">
    <property type="entry name" value="MFS"/>
    <property type="match status" value="1"/>
</dbReference>
<name>MDTH_SALCH</name>
<gene>
    <name evidence="1" type="primary">mdtH</name>
    <name type="ordered locus">SCH_1114</name>
</gene>
<feature type="chain" id="PRO_0000173347" description="Multidrug resistance protein MdtH">
    <location>
        <begin position="1"/>
        <end position="402"/>
    </location>
</feature>
<feature type="topological domain" description="Cytoplasmic" evidence="1">
    <location>
        <begin position="1"/>
        <end position="12"/>
    </location>
</feature>
<feature type="transmembrane region" description="Helical" evidence="1">
    <location>
        <begin position="13"/>
        <end position="33"/>
    </location>
</feature>
<feature type="topological domain" description="Periplasmic" evidence="1">
    <location>
        <begin position="34"/>
        <end position="98"/>
    </location>
</feature>
<feature type="transmembrane region" description="Helical" evidence="1">
    <location>
        <begin position="99"/>
        <end position="116"/>
    </location>
</feature>
<feature type="topological domain" description="Cytoplasmic" evidence="1">
    <location>
        <begin position="117"/>
        <end position="138"/>
    </location>
</feature>
<feature type="transmembrane region" description="Helical" evidence="1">
    <location>
        <begin position="139"/>
        <end position="159"/>
    </location>
</feature>
<feature type="topological domain" description="Periplasmic" evidence="1">
    <location>
        <begin position="160"/>
        <end position="164"/>
    </location>
</feature>
<feature type="transmembrane region" description="Helical" evidence="1">
    <location>
        <begin position="165"/>
        <end position="185"/>
    </location>
</feature>
<feature type="topological domain" description="Cytoplasmic" evidence="1">
    <location>
        <begin position="186"/>
        <end position="213"/>
    </location>
</feature>
<feature type="transmembrane region" description="Helical" evidence="1">
    <location>
        <begin position="214"/>
        <end position="234"/>
    </location>
</feature>
<feature type="topological domain" description="Periplasmic" evidence="1">
    <location>
        <begin position="235"/>
        <end position="243"/>
    </location>
</feature>
<feature type="transmembrane region" description="Helical" evidence="1">
    <location>
        <begin position="244"/>
        <end position="264"/>
    </location>
</feature>
<feature type="topological domain" description="Cytoplasmic" evidence="1">
    <location>
        <begin position="265"/>
        <end position="276"/>
    </location>
</feature>
<feature type="transmembrane region" description="Helical" evidence="1">
    <location>
        <begin position="277"/>
        <end position="297"/>
    </location>
</feature>
<feature type="topological domain" description="Periplasmic" evidence="1">
    <location>
        <begin position="298"/>
        <end position="299"/>
    </location>
</feature>
<feature type="transmembrane region" description="Helical" evidence="1">
    <location>
        <begin position="300"/>
        <end position="320"/>
    </location>
</feature>
<feature type="topological domain" description="Cytoplasmic" evidence="1">
    <location>
        <begin position="321"/>
        <end position="339"/>
    </location>
</feature>
<feature type="transmembrane region" description="Helical" evidence="1">
    <location>
        <begin position="340"/>
        <end position="360"/>
    </location>
</feature>
<feature type="topological domain" description="Periplasmic" evidence="1">
    <location>
        <begin position="361"/>
        <end position="367"/>
    </location>
</feature>
<feature type="transmembrane region" description="Helical" evidence="1">
    <location>
        <begin position="368"/>
        <end position="388"/>
    </location>
</feature>
<feature type="topological domain" description="Cytoplasmic" evidence="1">
    <location>
        <begin position="389"/>
        <end position="402"/>
    </location>
</feature>
<keyword id="KW-0997">Cell inner membrane</keyword>
<keyword id="KW-1003">Cell membrane</keyword>
<keyword id="KW-0472">Membrane</keyword>
<keyword id="KW-0812">Transmembrane</keyword>
<keyword id="KW-1133">Transmembrane helix</keyword>
<keyword id="KW-0813">Transport</keyword>
<organism>
    <name type="scientific">Salmonella choleraesuis (strain SC-B67)</name>
    <dbReference type="NCBI Taxonomy" id="321314"/>
    <lineage>
        <taxon>Bacteria</taxon>
        <taxon>Pseudomonadati</taxon>
        <taxon>Pseudomonadota</taxon>
        <taxon>Gammaproteobacteria</taxon>
        <taxon>Enterobacterales</taxon>
        <taxon>Enterobacteriaceae</taxon>
        <taxon>Salmonella</taxon>
    </lineage>
</organism>
<protein>
    <recommendedName>
        <fullName evidence="1">Multidrug resistance protein MdtH</fullName>
    </recommendedName>
</protein>